<reference key="1">
    <citation type="journal article" date="2009" name="PLoS ONE">
        <title>Complete genome sequence of Francisella tularensis subspecies holarctica FTNF002-00.</title>
        <authorList>
            <person name="Barabote R.D."/>
            <person name="Xie G."/>
            <person name="Brettin T.S."/>
            <person name="Hinrichs S.H."/>
            <person name="Fey P.D."/>
            <person name="Jay J.J."/>
            <person name="Engle J.L."/>
            <person name="Godbole S.D."/>
            <person name="Noronha J.M."/>
            <person name="Scheuermann R.H."/>
            <person name="Zhou L.W."/>
            <person name="Lion C."/>
            <person name="Dempsey M.P."/>
        </authorList>
    </citation>
    <scope>NUCLEOTIDE SEQUENCE [LARGE SCALE GENOMIC DNA]</scope>
    <source>
        <strain>FTNF002-00 / FTA</strain>
    </source>
</reference>
<accession>A7NC55</accession>
<dbReference type="EMBL" id="CP000803">
    <property type="protein sequence ID" value="ABU61558.2"/>
    <property type="molecule type" value="Genomic_DNA"/>
</dbReference>
<dbReference type="RefSeq" id="WP_003015901.1">
    <property type="nucleotide sequence ID" value="NC_009749.1"/>
</dbReference>
<dbReference type="SMR" id="A7NC55"/>
<dbReference type="KEGG" id="fta:FTA_1082"/>
<dbReference type="HOGENOM" id="CLU_148710_2_3_6"/>
<dbReference type="GO" id="GO:0022627">
    <property type="term" value="C:cytosolic small ribosomal subunit"/>
    <property type="evidence" value="ECO:0007669"/>
    <property type="project" value="TreeGrafter"/>
</dbReference>
<dbReference type="GO" id="GO:0070181">
    <property type="term" value="F:small ribosomal subunit rRNA binding"/>
    <property type="evidence" value="ECO:0007669"/>
    <property type="project" value="TreeGrafter"/>
</dbReference>
<dbReference type="GO" id="GO:0003735">
    <property type="term" value="F:structural constituent of ribosome"/>
    <property type="evidence" value="ECO:0007669"/>
    <property type="project" value="InterPro"/>
</dbReference>
<dbReference type="GO" id="GO:0006412">
    <property type="term" value="P:translation"/>
    <property type="evidence" value="ECO:0007669"/>
    <property type="project" value="UniProtKB-UniRule"/>
</dbReference>
<dbReference type="Gene3D" id="4.10.640.10">
    <property type="entry name" value="Ribosomal protein S18"/>
    <property type="match status" value="1"/>
</dbReference>
<dbReference type="HAMAP" id="MF_00270">
    <property type="entry name" value="Ribosomal_bS18"/>
    <property type="match status" value="1"/>
</dbReference>
<dbReference type="InterPro" id="IPR001648">
    <property type="entry name" value="Ribosomal_bS18"/>
</dbReference>
<dbReference type="InterPro" id="IPR018275">
    <property type="entry name" value="Ribosomal_bS18_CS"/>
</dbReference>
<dbReference type="InterPro" id="IPR036870">
    <property type="entry name" value="Ribosomal_bS18_sf"/>
</dbReference>
<dbReference type="NCBIfam" id="TIGR00165">
    <property type="entry name" value="S18"/>
    <property type="match status" value="1"/>
</dbReference>
<dbReference type="PANTHER" id="PTHR13479">
    <property type="entry name" value="30S RIBOSOMAL PROTEIN S18"/>
    <property type="match status" value="1"/>
</dbReference>
<dbReference type="PANTHER" id="PTHR13479:SF40">
    <property type="entry name" value="SMALL RIBOSOMAL SUBUNIT PROTEIN BS18M"/>
    <property type="match status" value="1"/>
</dbReference>
<dbReference type="Pfam" id="PF01084">
    <property type="entry name" value="Ribosomal_S18"/>
    <property type="match status" value="1"/>
</dbReference>
<dbReference type="PRINTS" id="PR00974">
    <property type="entry name" value="RIBOSOMALS18"/>
</dbReference>
<dbReference type="SUPFAM" id="SSF46911">
    <property type="entry name" value="Ribosomal protein S18"/>
    <property type="match status" value="1"/>
</dbReference>
<dbReference type="PROSITE" id="PS00057">
    <property type="entry name" value="RIBOSOMAL_S18"/>
    <property type="match status" value="1"/>
</dbReference>
<organism>
    <name type="scientific">Francisella tularensis subsp. holarctica (strain FTNF002-00 / FTA)</name>
    <dbReference type="NCBI Taxonomy" id="458234"/>
    <lineage>
        <taxon>Bacteria</taxon>
        <taxon>Pseudomonadati</taxon>
        <taxon>Pseudomonadota</taxon>
        <taxon>Gammaproteobacteria</taxon>
        <taxon>Thiotrichales</taxon>
        <taxon>Francisellaceae</taxon>
        <taxon>Francisella</taxon>
    </lineage>
</organism>
<protein>
    <recommendedName>
        <fullName evidence="1">Small ribosomal subunit protein bS18</fullName>
    </recommendedName>
    <alternativeName>
        <fullName evidence="2">30S ribosomal protein S18</fullName>
    </alternativeName>
</protein>
<gene>
    <name evidence="1" type="primary">rpsR</name>
    <name type="ordered locus">FTA_1082</name>
</gene>
<evidence type="ECO:0000255" key="1">
    <source>
        <dbReference type="HAMAP-Rule" id="MF_00270"/>
    </source>
</evidence>
<evidence type="ECO:0000305" key="2"/>
<name>RS18_FRATF</name>
<sequence length="72" mass="8379">MSRRKVCRFTIEGVKEIDYKDVNKLKAYINETGKIVPSRVTGTSAKYQRQLATAIKRARFLALLPYCDRHFN</sequence>
<comment type="function">
    <text evidence="1">Binds as a heterodimer with protein bS6 to the central domain of the 16S rRNA, where it helps stabilize the platform of the 30S subunit.</text>
</comment>
<comment type="subunit">
    <text evidence="1">Part of the 30S ribosomal subunit. Forms a tight heterodimer with protein bS6.</text>
</comment>
<comment type="similarity">
    <text evidence="1">Belongs to the bacterial ribosomal protein bS18 family.</text>
</comment>
<proteinExistence type="inferred from homology"/>
<feature type="chain" id="PRO_0000345470" description="Small ribosomal subunit protein bS18">
    <location>
        <begin position="1"/>
        <end position="72"/>
    </location>
</feature>
<keyword id="KW-0687">Ribonucleoprotein</keyword>
<keyword id="KW-0689">Ribosomal protein</keyword>
<keyword id="KW-0694">RNA-binding</keyword>
<keyword id="KW-0699">rRNA-binding</keyword>